<feature type="chain" id="PRO_0000348504" description="Putative uncharacterized protein DDB_G0286285">
    <location>
        <begin position="1"/>
        <end position="76"/>
    </location>
</feature>
<gene>
    <name type="ORF">DDB_G0286285</name>
</gene>
<keyword id="KW-1185">Reference proteome</keyword>
<sequence>MNVKSTVLDLISSQIYKPAEMIDPNSTLGDQGATFDLVEIKGKLDKKFGTNIPMSTMNGKISGIISEVEKSKKTIV</sequence>
<reference key="1">
    <citation type="journal article" date="2005" name="Nature">
        <title>The genome of the social amoeba Dictyostelium discoideum.</title>
        <authorList>
            <person name="Eichinger L."/>
            <person name="Pachebat J.A."/>
            <person name="Gloeckner G."/>
            <person name="Rajandream M.A."/>
            <person name="Sucgang R."/>
            <person name="Berriman M."/>
            <person name="Song J."/>
            <person name="Olsen R."/>
            <person name="Szafranski K."/>
            <person name="Xu Q."/>
            <person name="Tunggal B."/>
            <person name="Kummerfeld S."/>
            <person name="Madera M."/>
            <person name="Konfortov B.A."/>
            <person name="Rivero F."/>
            <person name="Bankier A.T."/>
            <person name="Lehmann R."/>
            <person name="Hamlin N."/>
            <person name="Davies R."/>
            <person name="Gaudet P."/>
            <person name="Fey P."/>
            <person name="Pilcher K."/>
            <person name="Chen G."/>
            <person name="Saunders D."/>
            <person name="Sodergren E.J."/>
            <person name="Davis P."/>
            <person name="Kerhornou A."/>
            <person name="Nie X."/>
            <person name="Hall N."/>
            <person name="Anjard C."/>
            <person name="Hemphill L."/>
            <person name="Bason N."/>
            <person name="Farbrother P."/>
            <person name="Desany B."/>
            <person name="Just E."/>
            <person name="Morio T."/>
            <person name="Rost R."/>
            <person name="Churcher C.M."/>
            <person name="Cooper J."/>
            <person name="Haydock S."/>
            <person name="van Driessche N."/>
            <person name="Cronin A."/>
            <person name="Goodhead I."/>
            <person name="Muzny D.M."/>
            <person name="Mourier T."/>
            <person name="Pain A."/>
            <person name="Lu M."/>
            <person name="Harper D."/>
            <person name="Lindsay R."/>
            <person name="Hauser H."/>
            <person name="James K.D."/>
            <person name="Quiles M."/>
            <person name="Madan Babu M."/>
            <person name="Saito T."/>
            <person name="Buchrieser C."/>
            <person name="Wardroper A."/>
            <person name="Felder M."/>
            <person name="Thangavelu M."/>
            <person name="Johnson D."/>
            <person name="Knights A."/>
            <person name="Loulseged H."/>
            <person name="Mungall K.L."/>
            <person name="Oliver K."/>
            <person name="Price C."/>
            <person name="Quail M.A."/>
            <person name="Urushihara H."/>
            <person name="Hernandez J."/>
            <person name="Rabbinowitsch E."/>
            <person name="Steffen D."/>
            <person name="Sanders M."/>
            <person name="Ma J."/>
            <person name="Kohara Y."/>
            <person name="Sharp S."/>
            <person name="Simmonds M.N."/>
            <person name="Spiegler S."/>
            <person name="Tivey A."/>
            <person name="Sugano S."/>
            <person name="White B."/>
            <person name="Walker D."/>
            <person name="Woodward J.R."/>
            <person name="Winckler T."/>
            <person name="Tanaka Y."/>
            <person name="Shaulsky G."/>
            <person name="Schleicher M."/>
            <person name="Weinstock G.M."/>
            <person name="Rosenthal A."/>
            <person name="Cox E.C."/>
            <person name="Chisholm R.L."/>
            <person name="Gibbs R.A."/>
            <person name="Loomis W.F."/>
            <person name="Platzer M."/>
            <person name="Kay R.R."/>
            <person name="Williams J.G."/>
            <person name="Dear P.H."/>
            <person name="Noegel A.A."/>
            <person name="Barrell B.G."/>
            <person name="Kuspa A."/>
        </authorList>
    </citation>
    <scope>NUCLEOTIDE SEQUENCE [LARGE SCALE GENOMIC DNA]</scope>
    <source>
        <strain>AX4</strain>
    </source>
</reference>
<name>Y6905_DICDI</name>
<accession>Q54LZ8</accession>
<dbReference type="EMBL" id="AAFI02000085">
    <property type="protein sequence ID" value="EAL64318.1"/>
    <property type="molecule type" value="Genomic_DNA"/>
</dbReference>
<dbReference type="RefSeq" id="XP_637833.1">
    <property type="nucleotide sequence ID" value="XM_632741.1"/>
</dbReference>
<dbReference type="SMR" id="Q54LZ8"/>
<dbReference type="FunCoup" id="Q54LZ8">
    <property type="interactions" value="877"/>
</dbReference>
<dbReference type="PaxDb" id="44689-DDB0186905"/>
<dbReference type="EnsemblProtists" id="EAL64318">
    <property type="protein sequence ID" value="EAL64318"/>
    <property type="gene ID" value="DDB_G0286285"/>
</dbReference>
<dbReference type="GeneID" id="8625547"/>
<dbReference type="KEGG" id="ddi:DDB_G0286285"/>
<dbReference type="dictyBase" id="DDB_G0286285"/>
<dbReference type="VEuPathDB" id="AmoebaDB:DDB_G0286285"/>
<dbReference type="eggNOG" id="ENOG502RINC">
    <property type="taxonomic scope" value="Eukaryota"/>
</dbReference>
<dbReference type="HOGENOM" id="CLU_2659720_0_0_1"/>
<dbReference type="InParanoid" id="Q54LZ8"/>
<dbReference type="OMA" id="HYEMNIP"/>
<dbReference type="PRO" id="PR:Q54LZ8"/>
<dbReference type="Proteomes" id="UP000002195">
    <property type="component" value="Chromosome 4"/>
</dbReference>
<dbReference type="Gene3D" id="1.10.1200.10">
    <property type="entry name" value="ACP-like"/>
    <property type="match status" value="1"/>
</dbReference>
<dbReference type="InterPro" id="IPR036736">
    <property type="entry name" value="ACP-like_sf"/>
</dbReference>
<dbReference type="SUPFAM" id="SSF47336">
    <property type="entry name" value="ACP-like"/>
    <property type="match status" value="1"/>
</dbReference>
<proteinExistence type="predicted"/>
<protein>
    <recommendedName>
        <fullName>Putative uncharacterized protein DDB_G0286285</fullName>
    </recommendedName>
</protein>
<organism>
    <name type="scientific">Dictyostelium discoideum</name>
    <name type="common">Social amoeba</name>
    <dbReference type="NCBI Taxonomy" id="44689"/>
    <lineage>
        <taxon>Eukaryota</taxon>
        <taxon>Amoebozoa</taxon>
        <taxon>Evosea</taxon>
        <taxon>Eumycetozoa</taxon>
        <taxon>Dictyostelia</taxon>
        <taxon>Dictyosteliales</taxon>
        <taxon>Dictyosteliaceae</taxon>
        <taxon>Dictyostelium</taxon>
    </lineage>
</organism>